<feature type="chain" id="PRO_0000335783" description="Pyridoxine/pyridoxamine 5'-phosphate oxidase">
    <location>
        <begin position="1"/>
        <end position="212"/>
    </location>
</feature>
<feature type="binding site" evidence="1">
    <location>
        <begin position="61"/>
        <end position="66"/>
    </location>
    <ligand>
        <name>FMN</name>
        <dbReference type="ChEBI" id="CHEBI:58210"/>
    </ligand>
</feature>
<feature type="binding site" evidence="1">
    <location>
        <position position="66"/>
    </location>
    <ligand>
        <name>substrate</name>
    </ligand>
</feature>
<feature type="binding site" evidence="1">
    <location>
        <begin position="76"/>
        <end position="77"/>
    </location>
    <ligand>
        <name>FMN</name>
        <dbReference type="ChEBI" id="CHEBI:58210"/>
    </ligand>
</feature>
<feature type="binding site" evidence="1">
    <location>
        <position position="83"/>
    </location>
    <ligand>
        <name>FMN</name>
        <dbReference type="ChEBI" id="CHEBI:58210"/>
    </ligand>
</feature>
<feature type="binding site" evidence="1">
    <location>
        <position position="105"/>
    </location>
    <ligand>
        <name>FMN</name>
        <dbReference type="ChEBI" id="CHEBI:58210"/>
    </ligand>
</feature>
<feature type="binding site" evidence="1">
    <location>
        <position position="123"/>
    </location>
    <ligand>
        <name>substrate</name>
    </ligand>
</feature>
<feature type="binding site" evidence="1">
    <location>
        <position position="127"/>
    </location>
    <ligand>
        <name>substrate</name>
    </ligand>
</feature>
<feature type="binding site" evidence="1">
    <location>
        <position position="131"/>
    </location>
    <ligand>
        <name>substrate</name>
    </ligand>
</feature>
<feature type="binding site" evidence="1">
    <location>
        <begin position="140"/>
        <end position="141"/>
    </location>
    <ligand>
        <name>FMN</name>
        <dbReference type="ChEBI" id="CHEBI:58210"/>
    </ligand>
</feature>
<feature type="binding site" evidence="1">
    <location>
        <position position="185"/>
    </location>
    <ligand>
        <name>FMN</name>
        <dbReference type="ChEBI" id="CHEBI:58210"/>
    </ligand>
</feature>
<feature type="binding site" evidence="1">
    <location>
        <begin position="191"/>
        <end position="193"/>
    </location>
    <ligand>
        <name>substrate</name>
    </ligand>
</feature>
<feature type="binding site" evidence="1">
    <location>
        <position position="195"/>
    </location>
    <ligand>
        <name>FMN</name>
        <dbReference type="ChEBI" id="CHEBI:58210"/>
    </ligand>
</feature>
<organism>
    <name type="scientific">Dichelobacter nodosus (strain VCS1703A)</name>
    <dbReference type="NCBI Taxonomy" id="246195"/>
    <lineage>
        <taxon>Bacteria</taxon>
        <taxon>Pseudomonadati</taxon>
        <taxon>Pseudomonadota</taxon>
        <taxon>Gammaproteobacteria</taxon>
        <taxon>Cardiobacteriales</taxon>
        <taxon>Cardiobacteriaceae</taxon>
        <taxon>Dichelobacter</taxon>
    </lineage>
</organism>
<accession>A5EXX0</accession>
<name>PDXH_DICNV</name>
<dbReference type="EC" id="1.4.3.5" evidence="1"/>
<dbReference type="EMBL" id="CP000513">
    <property type="protein sequence ID" value="ABQ13205.1"/>
    <property type="molecule type" value="Genomic_DNA"/>
</dbReference>
<dbReference type="RefSeq" id="WP_012031335.1">
    <property type="nucleotide sequence ID" value="NC_009446.1"/>
</dbReference>
<dbReference type="SMR" id="A5EXX0"/>
<dbReference type="STRING" id="246195.DNO_1023"/>
<dbReference type="KEGG" id="dno:DNO_1023"/>
<dbReference type="eggNOG" id="COG0259">
    <property type="taxonomic scope" value="Bacteria"/>
</dbReference>
<dbReference type="HOGENOM" id="CLU_032263_2_2_6"/>
<dbReference type="OrthoDB" id="9780392at2"/>
<dbReference type="UniPathway" id="UPA01068">
    <property type="reaction ID" value="UER00304"/>
</dbReference>
<dbReference type="UniPathway" id="UPA01068">
    <property type="reaction ID" value="UER00305"/>
</dbReference>
<dbReference type="Proteomes" id="UP000000248">
    <property type="component" value="Chromosome"/>
</dbReference>
<dbReference type="GO" id="GO:0010181">
    <property type="term" value="F:FMN binding"/>
    <property type="evidence" value="ECO:0007669"/>
    <property type="project" value="UniProtKB-UniRule"/>
</dbReference>
<dbReference type="GO" id="GO:0004733">
    <property type="term" value="F:pyridoxamine phosphate oxidase activity"/>
    <property type="evidence" value="ECO:0007669"/>
    <property type="project" value="UniProtKB-UniRule"/>
</dbReference>
<dbReference type="GO" id="GO:0008615">
    <property type="term" value="P:pyridoxine biosynthetic process"/>
    <property type="evidence" value="ECO:0007669"/>
    <property type="project" value="UniProtKB-KW"/>
</dbReference>
<dbReference type="FunFam" id="2.30.110.10:FF:000020">
    <property type="entry name" value="PNPO isoform 11"/>
    <property type="match status" value="1"/>
</dbReference>
<dbReference type="Gene3D" id="2.30.110.10">
    <property type="entry name" value="Electron Transport, Fmn-binding Protein, Chain A"/>
    <property type="match status" value="1"/>
</dbReference>
<dbReference type="HAMAP" id="MF_01629">
    <property type="entry name" value="PdxH"/>
    <property type="match status" value="1"/>
</dbReference>
<dbReference type="InterPro" id="IPR000659">
    <property type="entry name" value="Pyridox_Oxase"/>
</dbReference>
<dbReference type="InterPro" id="IPR019740">
    <property type="entry name" value="Pyridox_Oxase_CS"/>
</dbReference>
<dbReference type="InterPro" id="IPR011576">
    <property type="entry name" value="Pyridox_Oxase_N"/>
</dbReference>
<dbReference type="InterPro" id="IPR019576">
    <property type="entry name" value="Pyridoxamine_oxidase_dimer_C"/>
</dbReference>
<dbReference type="InterPro" id="IPR012349">
    <property type="entry name" value="Split_barrel_FMN-bd"/>
</dbReference>
<dbReference type="NCBIfam" id="TIGR00558">
    <property type="entry name" value="pdxH"/>
    <property type="match status" value="1"/>
</dbReference>
<dbReference type="NCBIfam" id="NF004231">
    <property type="entry name" value="PRK05679.1"/>
    <property type="match status" value="1"/>
</dbReference>
<dbReference type="PANTHER" id="PTHR10851:SF0">
    <property type="entry name" value="PYRIDOXINE-5'-PHOSPHATE OXIDASE"/>
    <property type="match status" value="1"/>
</dbReference>
<dbReference type="PANTHER" id="PTHR10851">
    <property type="entry name" value="PYRIDOXINE-5-PHOSPHATE OXIDASE"/>
    <property type="match status" value="1"/>
</dbReference>
<dbReference type="Pfam" id="PF10590">
    <property type="entry name" value="PNP_phzG_C"/>
    <property type="match status" value="1"/>
</dbReference>
<dbReference type="Pfam" id="PF01243">
    <property type="entry name" value="PNPOx_N"/>
    <property type="match status" value="1"/>
</dbReference>
<dbReference type="PIRSF" id="PIRSF000190">
    <property type="entry name" value="Pyd_amn-ph_oxd"/>
    <property type="match status" value="1"/>
</dbReference>
<dbReference type="SUPFAM" id="SSF50475">
    <property type="entry name" value="FMN-binding split barrel"/>
    <property type="match status" value="1"/>
</dbReference>
<dbReference type="PROSITE" id="PS01064">
    <property type="entry name" value="PYRIDOX_OXIDASE"/>
    <property type="match status" value="1"/>
</dbReference>
<reference key="1">
    <citation type="journal article" date="2007" name="Nat. Biotechnol.">
        <title>Genome sequence and identification of candidate vaccine antigens from the animal pathogen Dichelobacter nodosus.</title>
        <authorList>
            <person name="Myers G.S.A."/>
            <person name="Parker D."/>
            <person name="Al-Hasani K."/>
            <person name="Kennan R.M."/>
            <person name="Seemann T."/>
            <person name="Ren Q."/>
            <person name="Badger J.H."/>
            <person name="Selengut J.D."/>
            <person name="Deboy R.T."/>
            <person name="Tettelin H."/>
            <person name="Boyce J.D."/>
            <person name="McCarl V.P."/>
            <person name="Han X."/>
            <person name="Nelson W.C."/>
            <person name="Madupu R."/>
            <person name="Mohamoud Y."/>
            <person name="Holley T."/>
            <person name="Fedorova N."/>
            <person name="Khouri H."/>
            <person name="Bottomley S.P."/>
            <person name="Whittington R.J."/>
            <person name="Adler B."/>
            <person name="Songer J.G."/>
            <person name="Rood J.I."/>
            <person name="Paulsen I.T."/>
        </authorList>
    </citation>
    <scope>NUCLEOTIDE SEQUENCE [LARGE SCALE GENOMIC DNA]</scope>
    <source>
        <strain>VCS1703A</strain>
    </source>
</reference>
<protein>
    <recommendedName>
        <fullName evidence="1">Pyridoxine/pyridoxamine 5'-phosphate oxidase</fullName>
        <ecNumber evidence="1">1.4.3.5</ecNumber>
    </recommendedName>
    <alternativeName>
        <fullName evidence="1">PNP/PMP oxidase</fullName>
        <shortName evidence="1">PNPOx</shortName>
    </alternativeName>
    <alternativeName>
        <fullName evidence="1">Pyridoxal 5'-phosphate synthase</fullName>
    </alternativeName>
</protein>
<evidence type="ECO:0000255" key="1">
    <source>
        <dbReference type="HAMAP-Rule" id="MF_01629"/>
    </source>
</evidence>
<sequence length="212" mass="24570">MDIGSIRHDFTEHPPLLEQDLAADPIEQFAAWFQYAVDSGISEPNGFVLATVAADGQPSQRSVLLKLFDEEGFVFYTNYSSQKAEEIEKNAQVSMSFPWYALQRQIHVYGRAEKIPREQSLAYFLTRPQGSQIGAWASPQSKIIESRDFLMLKWQNMKAKFHEGKIPLPDFWGGYRVRPHKIEFWQGQPSRLHDRFLYEKTENGWTVSRRAP</sequence>
<comment type="function">
    <text evidence="1">Catalyzes the oxidation of either pyridoxine 5'-phosphate (PNP) or pyridoxamine 5'-phosphate (PMP) into pyridoxal 5'-phosphate (PLP).</text>
</comment>
<comment type="catalytic activity">
    <reaction evidence="1">
        <text>pyridoxamine 5'-phosphate + O2 + H2O = pyridoxal 5'-phosphate + H2O2 + NH4(+)</text>
        <dbReference type="Rhea" id="RHEA:15817"/>
        <dbReference type="ChEBI" id="CHEBI:15377"/>
        <dbReference type="ChEBI" id="CHEBI:15379"/>
        <dbReference type="ChEBI" id="CHEBI:16240"/>
        <dbReference type="ChEBI" id="CHEBI:28938"/>
        <dbReference type="ChEBI" id="CHEBI:58451"/>
        <dbReference type="ChEBI" id="CHEBI:597326"/>
        <dbReference type="EC" id="1.4.3.5"/>
    </reaction>
</comment>
<comment type="catalytic activity">
    <reaction evidence="1">
        <text>pyridoxine 5'-phosphate + O2 = pyridoxal 5'-phosphate + H2O2</text>
        <dbReference type="Rhea" id="RHEA:15149"/>
        <dbReference type="ChEBI" id="CHEBI:15379"/>
        <dbReference type="ChEBI" id="CHEBI:16240"/>
        <dbReference type="ChEBI" id="CHEBI:58589"/>
        <dbReference type="ChEBI" id="CHEBI:597326"/>
        <dbReference type="EC" id="1.4.3.5"/>
    </reaction>
</comment>
<comment type="cofactor">
    <cofactor evidence="1">
        <name>FMN</name>
        <dbReference type="ChEBI" id="CHEBI:58210"/>
    </cofactor>
    <text evidence="1">Binds 1 FMN per subunit.</text>
</comment>
<comment type="pathway">
    <text evidence="1">Cofactor metabolism; pyridoxal 5'-phosphate salvage; pyridoxal 5'-phosphate from pyridoxamine 5'-phosphate: step 1/1.</text>
</comment>
<comment type="pathway">
    <text evidence="1">Cofactor metabolism; pyridoxal 5'-phosphate salvage; pyridoxal 5'-phosphate from pyridoxine 5'-phosphate: step 1/1.</text>
</comment>
<comment type="subunit">
    <text evidence="1">Homodimer.</text>
</comment>
<comment type="similarity">
    <text evidence="1">Belongs to the pyridoxamine 5'-phosphate oxidase family.</text>
</comment>
<gene>
    <name evidence="1" type="primary">pdxH</name>
    <name type="ordered locus">DNO_1023</name>
</gene>
<proteinExistence type="inferred from homology"/>
<keyword id="KW-0285">Flavoprotein</keyword>
<keyword id="KW-0288">FMN</keyword>
<keyword id="KW-0560">Oxidoreductase</keyword>
<keyword id="KW-0664">Pyridoxine biosynthesis</keyword>
<keyword id="KW-1185">Reference proteome</keyword>